<gene>
    <name evidence="1" type="primary">ndk</name>
    <name type="ordered locus">OE_2667F</name>
</gene>
<keyword id="KW-0067">ATP-binding</keyword>
<keyword id="KW-0963">Cytoplasm</keyword>
<keyword id="KW-0418">Kinase</keyword>
<keyword id="KW-0460">Magnesium</keyword>
<keyword id="KW-0479">Metal-binding</keyword>
<keyword id="KW-0546">Nucleotide metabolism</keyword>
<keyword id="KW-0547">Nucleotide-binding</keyword>
<keyword id="KW-0597">Phosphoprotein</keyword>
<keyword id="KW-0808">Transferase</keyword>
<evidence type="ECO:0000255" key="1">
    <source>
        <dbReference type="HAMAP-Rule" id="MF_00451"/>
    </source>
</evidence>
<name>NDK_HALS3</name>
<sequence length="161" mass="18065">MTDHDERTFVMVKPDGVQRGLIGDIVTRLETKGLKMVGGKFMRIDEELAHEHYAEHEDKPFFDGLVSFITSGPVFAMVWEGADATRQVRQLMGATDAQDAAPGTIRGDYGNDLGHNLIHGSDHEDEGANEREIALFFDDDELVDWDRDASAWVYEDLADHD</sequence>
<reference key="1">
    <citation type="journal article" date="2008" name="Genomics">
        <title>Evolution in the laboratory: the genome of Halobacterium salinarum strain R1 compared to that of strain NRC-1.</title>
        <authorList>
            <person name="Pfeiffer F."/>
            <person name="Schuster S.C."/>
            <person name="Broicher A."/>
            <person name="Falb M."/>
            <person name="Palm P."/>
            <person name="Rodewald K."/>
            <person name="Ruepp A."/>
            <person name="Soppa J."/>
            <person name="Tittor J."/>
            <person name="Oesterhelt D."/>
        </authorList>
    </citation>
    <scope>NUCLEOTIDE SEQUENCE [LARGE SCALE GENOMIC DNA]</scope>
    <source>
        <strain>ATCC 29341 / DSM 671 / R1</strain>
    </source>
</reference>
<dbReference type="EC" id="2.7.4.6" evidence="1"/>
<dbReference type="EMBL" id="AM774415">
    <property type="protein sequence ID" value="CAP13817.1"/>
    <property type="molecule type" value="Genomic_DNA"/>
</dbReference>
<dbReference type="RefSeq" id="WP_010902835.1">
    <property type="nucleotide sequence ID" value="NC_010364.1"/>
</dbReference>
<dbReference type="SMR" id="B0R502"/>
<dbReference type="EnsemblBacteria" id="CAP13817">
    <property type="protein sequence ID" value="CAP13817"/>
    <property type="gene ID" value="OE_2667F"/>
</dbReference>
<dbReference type="GeneID" id="89349516"/>
<dbReference type="KEGG" id="hsl:OE_2667F"/>
<dbReference type="HOGENOM" id="CLU_060216_6_3_2"/>
<dbReference type="PhylomeDB" id="B0R502"/>
<dbReference type="Proteomes" id="UP000001321">
    <property type="component" value="Chromosome"/>
</dbReference>
<dbReference type="GO" id="GO:0005737">
    <property type="term" value="C:cytoplasm"/>
    <property type="evidence" value="ECO:0007669"/>
    <property type="project" value="UniProtKB-SubCell"/>
</dbReference>
<dbReference type="GO" id="GO:0005524">
    <property type="term" value="F:ATP binding"/>
    <property type="evidence" value="ECO:0007669"/>
    <property type="project" value="UniProtKB-UniRule"/>
</dbReference>
<dbReference type="GO" id="GO:0046872">
    <property type="term" value="F:metal ion binding"/>
    <property type="evidence" value="ECO:0007669"/>
    <property type="project" value="UniProtKB-KW"/>
</dbReference>
<dbReference type="GO" id="GO:0004550">
    <property type="term" value="F:nucleoside diphosphate kinase activity"/>
    <property type="evidence" value="ECO:0007669"/>
    <property type="project" value="UniProtKB-UniRule"/>
</dbReference>
<dbReference type="GO" id="GO:0006241">
    <property type="term" value="P:CTP biosynthetic process"/>
    <property type="evidence" value="ECO:0007669"/>
    <property type="project" value="UniProtKB-UniRule"/>
</dbReference>
<dbReference type="GO" id="GO:0006183">
    <property type="term" value="P:GTP biosynthetic process"/>
    <property type="evidence" value="ECO:0007669"/>
    <property type="project" value="UniProtKB-UniRule"/>
</dbReference>
<dbReference type="GO" id="GO:0006228">
    <property type="term" value="P:UTP biosynthetic process"/>
    <property type="evidence" value="ECO:0007669"/>
    <property type="project" value="UniProtKB-UniRule"/>
</dbReference>
<dbReference type="CDD" id="cd04413">
    <property type="entry name" value="NDPk_I"/>
    <property type="match status" value="1"/>
</dbReference>
<dbReference type="FunFam" id="3.30.70.141:FF:000003">
    <property type="entry name" value="Nucleoside diphosphate kinase"/>
    <property type="match status" value="1"/>
</dbReference>
<dbReference type="Gene3D" id="3.30.70.141">
    <property type="entry name" value="Nucleoside diphosphate kinase-like domain"/>
    <property type="match status" value="1"/>
</dbReference>
<dbReference type="HAMAP" id="MF_00451">
    <property type="entry name" value="NDP_kinase"/>
    <property type="match status" value="1"/>
</dbReference>
<dbReference type="InterPro" id="IPR034907">
    <property type="entry name" value="NDK-like_dom"/>
</dbReference>
<dbReference type="InterPro" id="IPR036850">
    <property type="entry name" value="NDK-like_dom_sf"/>
</dbReference>
<dbReference type="InterPro" id="IPR001564">
    <property type="entry name" value="Nucleoside_diP_kinase"/>
</dbReference>
<dbReference type="NCBIfam" id="NF001908">
    <property type="entry name" value="PRK00668.1"/>
    <property type="match status" value="1"/>
</dbReference>
<dbReference type="PANTHER" id="PTHR11349">
    <property type="entry name" value="NUCLEOSIDE DIPHOSPHATE KINASE"/>
    <property type="match status" value="1"/>
</dbReference>
<dbReference type="Pfam" id="PF00334">
    <property type="entry name" value="NDK"/>
    <property type="match status" value="1"/>
</dbReference>
<dbReference type="PRINTS" id="PR01243">
    <property type="entry name" value="NUCDPKINASE"/>
</dbReference>
<dbReference type="SMART" id="SM00562">
    <property type="entry name" value="NDK"/>
    <property type="match status" value="1"/>
</dbReference>
<dbReference type="SUPFAM" id="SSF54919">
    <property type="entry name" value="Nucleoside diphosphate kinase, NDK"/>
    <property type="match status" value="1"/>
</dbReference>
<dbReference type="PROSITE" id="PS51374">
    <property type="entry name" value="NDPK_LIKE"/>
    <property type="match status" value="1"/>
</dbReference>
<organism>
    <name type="scientific">Halobacterium salinarum (strain ATCC 29341 / DSM 671 / R1)</name>
    <dbReference type="NCBI Taxonomy" id="478009"/>
    <lineage>
        <taxon>Archaea</taxon>
        <taxon>Methanobacteriati</taxon>
        <taxon>Methanobacteriota</taxon>
        <taxon>Stenosarchaea group</taxon>
        <taxon>Halobacteria</taxon>
        <taxon>Halobacteriales</taxon>
        <taxon>Halobacteriaceae</taxon>
        <taxon>Halobacterium</taxon>
        <taxon>Halobacterium salinarum NRC-34001</taxon>
    </lineage>
</organism>
<proteinExistence type="inferred from homology"/>
<feature type="chain" id="PRO_1000192303" description="Nucleoside diphosphate kinase">
    <location>
        <begin position="1"/>
        <end position="161"/>
    </location>
</feature>
<feature type="active site" description="Pros-phosphohistidine intermediate" evidence="1">
    <location>
        <position position="119"/>
    </location>
</feature>
<feature type="binding site" evidence="1">
    <location>
        <position position="13"/>
    </location>
    <ligand>
        <name>ATP</name>
        <dbReference type="ChEBI" id="CHEBI:30616"/>
    </ligand>
</feature>
<feature type="binding site" evidence="1">
    <location>
        <position position="61"/>
    </location>
    <ligand>
        <name>ATP</name>
        <dbReference type="ChEBI" id="CHEBI:30616"/>
    </ligand>
</feature>
<feature type="binding site" evidence="1">
    <location>
        <position position="89"/>
    </location>
    <ligand>
        <name>ATP</name>
        <dbReference type="ChEBI" id="CHEBI:30616"/>
    </ligand>
</feature>
<feature type="binding site" evidence="1">
    <location>
        <position position="95"/>
    </location>
    <ligand>
        <name>ATP</name>
        <dbReference type="ChEBI" id="CHEBI:30616"/>
    </ligand>
</feature>
<feature type="binding site" evidence="1">
    <location>
        <position position="106"/>
    </location>
    <ligand>
        <name>ATP</name>
        <dbReference type="ChEBI" id="CHEBI:30616"/>
    </ligand>
</feature>
<feature type="binding site" evidence="1">
    <location>
        <position position="116"/>
    </location>
    <ligand>
        <name>ATP</name>
        <dbReference type="ChEBI" id="CHEBI:30616"/>
    </ligand>
</feature>
<accession>B0R502</accession>
<protein>
    <recommendedName>
        <fullName evidence="1">Nucleoside diphosphate kinase</fullName>
        <shortName evidence="1">NDK</shortName>
        <shortName evidence="1">NDP kinase</shortName>
        <ecNumber evidence="1">2.7.4.6</ecNumber>
    </recommendedName>
    <alternativeName>
        <fullName evidence="1">Nucleoside-2-P kinase</fullName>
    </alternativeName>
</protein>
<comment type="function">
    <text evidence="1">Major role in the synthesis of nucleoside triphosphates other than ATP. The ATP gamma phosphate is transferred to the NDP beta phosphate via a ping-pong mechanism, using a phosphorylated active-site intermediate.</text>
</comment>
<comment type="catalytic activity">
    <reaction evidence="1">
        <text>a 2'-deoxyribonucleoside 5'-diphosphate + ATP = a 2'-deoxyribonucleoside 5'-triphosphate + ADP</text>
        <dbReference type="Rhea" id="RHEA:44640"/>
        <dbReference type="ChEBI" id="CHEBI:30616"/>
        <dbReference type="ChEBI" id="CHEBI:61560"/>
        <dbReference type="ChEBI" id="CHEBI:73316"/>
        <dbReference type="ChEBI" id="CHEBI:456216"/>
        <dbReference type="EC" id="2.7.4.6"/>
    </reaction>
</comment>
<comment type="catalytic activity">
    <reaction evidence="1">
        <text>a ribonucleoside 5'-diphosphate + ATP = a ribonucleoside 5'-triphosphate + ADP</text>
        <dbReference type="Rhea" id="RHEA:18113"/>
        <dbReference type="ChEBI" id="CHEBI:30616"/>
        <dbReference type="ChEBI" id="CHEBI:57930"/>
        <dbReference type="ChEBI" id="CHEBI:61557"/>
        <dbReference type="ChEBI" id="CHEBI:456216"/>
        <dbReference type="EC" id="2.7.4.6"/>
    </reaction>
</comment>
<comment type="cofactor">
    <cofactor evidence="1">
        <name>Mg(2+)</name>
        <dbReference type="ChEBI" id="CHEBI:18420"/>
    </cofactor>
</comment>
<comment type="subcellular location">
    <subcellularLocation>
        <location evidence="1">Cytoplasm</location>
    </subcellularLocation>
</comment>
<comment type="similarity">
    <text evidence="1">Belongs to the NDK family.</text>
</comment>